<protein>
    <recommendedName>
        <fullName evidence="1">ATP-dependent Clp protease proteolytic subunit</fullName>
        <ecNumber evidence="1">3.4.21.92</ecNumber>
    </recommendedName>
    <alternativeName>
        <fullName evidence="1">Endopeptidase Clp</fullName>
    </alternativeName>
</protein>
<feature type="chain" id="PRO_0000179714" description="ATP-dependent Clp protease proteolytic subunit">
    <location>
        <begin position="1"/>
        <end position="200"/>
    </location>
</feature>
<feature type="active site" description="Nucleophile" evidence="1">
    <location>
        <position position="103"/>
    </location>
</feature>
<feature type="active site" evidence="1">
    <location>
        <position position="128"/>
    </location>
</feature>
<sequence length="200" mass="22000">MSPIIDALVPMVVEQTSRGERSYDIYSRLLKERVIFLTGQVEDHMANLVVAQLLFLESENPDKDIFLYINSPGGSVTAGMSIYDTMQFIKPNVSTVCMGQACSMGAFLLAGGAPGKRYVLPNSRVMIHQPLGGFQGQASDIQIHAQEILTIKTKLNKLLAEHTGQPLEVIERDTDRDNFMSADQAVEYGLVDAVLTHRSA</sequence>
<name>CLPP_VIBVY</name>
<organism>
    <name type="scientific">Vibrio vulnificus (strain YJ016)</name>
    <dbReference type="NCBI Taxonomy" id="196600"/>
    <lineage>
        <taxon>Bacteria</taxon>
        <taxon>Pseudomonadati</taxon>
        <taxon>Pseudomonadota</taxon>
        <taxon>Gammaproteobacteria</taxon>
        <taxon>Vibrionales</taxon>
        <taxon>Vibrionaceae</taxon>
        <taxon>Vibrio</taxon>
    </lineage>
</organism>
<gene>
    <name evidence="1" type="primary">clpP</name>
    <name type="ordered locus">VV1104</name>
</gene>
<reference key="1">
    <citation type="journal article" date="2003" name="Genome Res.">
        <title>Comparative genome analysis of Vibrio vulnificus, a marine pathogen.</title>
        <authorList>
            <person name="Chen C.-Y."/>
            <person name="Wu K.-M."/>
            <person name="Chang Y.-C."/>
            <person name="Chang C.-H."/>
            <person name="Tsai H.-C."/>
            <person name="Liao T.-L."/>
            <person name="Liu Y.-M."/>
            <person name="Chen H.-J."/>
            <person name="Shen A.B.-T."/>
            <person name="Li J.-C."/>
            <person name="Su T.-L."/>
            <person name="Shao C.-P."/>
            <person name="Lee C.-T."/>
            <person name="Hor L.-I."/>
            <person name="Tsai S.-F."/>
        </authorList>
    </citation>
    <scope>NUCLEOTIDE SEQUENCE [LARGE SCALE GENOMIC DNA]</scope>
    <source>
        <strain>YJ016</strain>
    </source>
</reference>
<proteinExistence type="inferred from homology"/>
<keyword id="KW-0963">Cytoplasm</keyword>
<keyword id="KW-0378">Hydrolase</keyword>
<keyword id="KW-0645">Protease</keyword>
<keyword id="KW-0720">Serine protease</keyword>
<accession>Q7MMG7</accession>
<dbReference type="EC" id="3.4.21.92" evidence="1"/>
<dbReference type="EMBL" id="BA000037">
    <property type="protein sequence ID" value="BAC93868.1"/>
    <property type="status" value="ALT_INIT"/>
    <property type="molecule type" value="Genomic_DNA"/>
</dbReference>
<dbReference type="SMR" id="Q7MMG7"/>
<dbReference type="STRING" id="672.VV93_v1c10250"/>
<dbReference type="MEROPS" id="S14.001"/>
<dbReference type="KEGG" id="vvy:VV1104"/>
<dbReference type="eggNOG" id="COG0740">
    <property type="taxonomic scope" value="Bacteria"/>
</dbReference>
<dbReference type="HOGENOM" id="CLU_058707_3_2_6"/>
<dbReference type="Proteomes" id="UP000002675">
    <property type="component" value="Chromosome I"/>
</dbReference>
<dbReference type="GO" id="GO:0005737">
    <property type="term" value="C:cytoplasm"/>
    <property type="evidence" value="ECO:0007669"/>
    <property type="project" value="UniProtKB-SubCell"/>
</dbReference>
<dbReference type="GO" id="GO:0009368">
    <property type="term" value="C:endopeptidase Clp complex"/>
    <property type="evidence" value="ECO:0007669"/>
    <property type="project" value="TreeGrafter"/>
</dbReference>
<dbReference type="GO" id="GO:0004176">
    <property type="term" value="F:ATP-dependent peptidase activity"/>
    <property type="evidence" value="ECO:0007669"/>
    <property type="project" value="InterPro"/>
</dbReference>
<dbReference type="GO" id="GO:0051117">
    <property type="term" value="F:ATPase binding"/>
    <property type="evidence" value="ECO:0007669"/>
    <property type="project" value="TreeGrafter"/>
</dbReference>
<dbReference type="GO" id="GO:0004252">
    <property type="term" value="F:serine-type endopeptidase activity"/>
    <property type="evidence" value="ECO:0007669"/>
    <property type="project" value="UniProtKB-UniRule"/>
</dbReference>
<dbReference type="GO" id="GO:0006515">
    <property type="term" value="P:protein quality control for misfolded or incompletely synthesized proteins"/>
    <property type="evidence" value="ECO:0007669"/>
    <property type="project" value="TreeGrafter"/>
</dbReference>
<dbReference type="CDD" id="cd07017">
    <property type="entry name" value="S14_ClpP_2"/>
    <property type="match status" value="1"/>
</dbReference>
<dbReference type="FunFam" id="3.90.226.10:FF:000001">
    <property type="entry name" value="ATP-dependent Clp protease proteolytic subunit"/>
    <property type="match status" value="1"/>
</dbReference>
<dbReference type="Gene3D" id="3.90.226.10">
    <property type="entry name" value="2-enoyl-CoA Hydratase, Chain A, domain 1"/>
    <property type="match status" value="1"/>
</dbReference>
<dbReference type="HAMAP" id="MF_00444">
    <property type="entry name" value="ClpP"/>
    <property type="match status" value="1"/>
</dbReference>
<dbReference type="InterPro" id="IPR001907">
    <property type="entry name" value="ClpP"/>
</dbReference>
<dbReference type="InterPro" id="IPR029045">
    <property type="entry name" value="ClpP/crotonase-like_dom_sf"/>
</dbReference>
<dbReference type="InterPro" id="IPR023562">
    <property type="entry name" value="ClpP/TepA"/>
</dbReference>
<dbReference type="InterPro" id="IPR033135">
    <property type="entry name" value="ClpP_His_AS"/>
</dbReference>
<dbReference type="InterPro" id="IPR018215">
    <property type="entry name" value="ClpP_Ser_AS"/>
</dbReference>
<dbReference type="NCBIfam" id="TIGR00493">
    <property type="entry name" value="clpP"/>
    <property type="match status" value="1"/>
</dbReference>
<dbReference type="NCBIfam" id="NF001368">
    <property type="entry name" value="PRK00277.1"/>
    <property type="match status" value="1"/>
</dbReference>
<dbReference type="NCBIfam" id="NF009205">
    <property type="entry name" value="PRK12553.1"/>
    <property type="match status" value="1"/>
</dbReference>
<dbReference type="PANTHER" id="PTHR10381">
    <property type="entry name" value="ATP-DEPENDENT CLP PROTEASE PROTEOLYTIC SUBUNIT"/>
    <property type="match status" value="1"/>
</dbReference>
<dbReference type="PANTHER" id="PTHR10381:SF70">
    <property type="entry name" value="ATP-DEPENDENT CLP PROTEASE PROTEOLYTIC SUBUNIT"/>
    <property type="match status" value="1"/>
</dbReference>
<dbReference type="Pfam" id="PF00574">
    <property type="entry name" value="CLP_protease"/>
    <property type="match status" value="1"/>
</dbReference>
<dbReference type="PRINTS" id="PR00127">
    <property type="entry name" value="CLPPROTEASEP"/>
</dbReference>
<dbReference type="SUPFAM" id="SSF52096">
    <property type="entry name" value="ClpP/crotonase"/>
    <property type="match status" value="1"/>
</dbReference>
<dbReference type="PROSITE" id="PS00382">
    <property type="entry name" value="CLP_PROTEASE_HIS"/>
    <property type="match status" value="1"/>
</dbReference>
<dbReference type="PROSITE" id="PS00381">
    <property type="entry name" value="CLP_PROTEASE_SER"/>
    <property type="match status" value="1"/>
</dbReference>
<evidence type="ECO:0000255" key="1">
    <source>
        <dbReference type="HAMAP-Rule" id="MF_00444"/>
    </source>
</evidence>
<evidence type="ECO:0000305" key="2"/>
<comment type="function">
    <text evidence="1">Cleaves peptides in various proteins in a process that requires ATP hydrolysis. Has a chymotrypsin-like activity. Plays a major role in the degradation of misfolded proteins.</text>
</comment>
<comment type="catalytic activity">
    <reaction evidence="1">
        <text>Hydrolysis of proteins to small peptides in the presence of ATP and magnesium. alpha-casein is the usual test substrate. In the absence of ATP, only oligopeptides shorter than five residues are hydrolyzed (such as succinyl-Leu-Tyr-|-NHMec, and Leu-Tyr-Leu-|-Tyr-Trp, in which cleavage of the -Tyr-|-Leu- and -Tyr-|-Trp bonds also occurs).</text>
        <dbReference type="EC" id="3.4.21.92"/>
    </reaction>
</comment>
<comment type="subunit">
    <text evidence="1">Fourteen ClpP subunits assemble into 2 heptameric rings which stack back to back to give a disk-like structure with a central cavity, resembling the structure of eukaryotic proteasomes.</text>
</comment>
<comment type="subcellular location">
    <subcellularLocation>
        <location evidence="1">Cytoplasm</location>
    </subcellularLocation>
</comment>
<comment type="similarity">
    <text evidence="1">Belongs to the peptidase S14 family.</text>
</comment>
<comment type="sequence caution" evidence="2">
    <conflict type="erroneous initiation">
        <sequence resource="EMBL-CDS" id="BAC93868"/>
    </conflict>
</comment>